<name>PSBA_BARVE</name>
<feature type="initiator methionine" description="Removed" evidence="1">
    <location>
        <position position="1"/>
    </location>
</feature>
<feature type="chain" id="PRO_0000339952" description="Photosystem II protein D1" evidence="2">
    <location>
        <begin position="2"/>
        <end position="344"/>
    </location>
</feature>
<feature type="propeptide" id="PRO_0000339953" evidence="2">
    <location>
        <begin position="345"/>
        <end position="353"/>
    </location>
</feature>
<feature type="transmembrane region" description="Helical" evidence="2">
    <location>
        <begin position="29"/>
        <end position="46"/>
    </location>
</feature>
<feature type="transmembrane region" description="Helical" evidence="2">
    <location>
        <begin position="118"/>
        <end position="133"/>
    </location>
</feature>
<feature type="transmembrane region" description="Helical" evidence="2">
    <location>
        <begin position="142"/>
        <end position="156"/>
    </location>
</feature>
<feature type="transmembrane region" description="Helical" evidence="2">
    <location>
        <begin position="197"/>
        <end position="218"/>
    </location>
</feature>
<feature type="transmembrane region" description="Helical" evidence="2">
    <location>
        <begin position="274"/>
        <end position="288"/>
    </location>
</feature>
<feature type="binding site" description="axial binding residue" evidence="2">
    <location>
        <position position="118"/>
    </location>
    <ligand>
        <name>chlorophyll a</name>
        <dbReference type="ChEBI" id="CHEBI:58416"/>
        <label>ChlzD1</label>
    </ligand>
    <ligandPart>
        <name>Mg</name>
        <dbReference type="ChEBI" id="CHEBI:25107"/>
    </ligandPart>
</feature>
<feature type="binding site" evidence="2">
    <location>
        <position position="126"/>
    </location>
    <ligand>
        <name>pheophytin a</name>
        <dbReference type="ChEBI" id="CHEBI:136840"/>
        <label>D1</label>
    </ligand>
</feature>
<feature type="binding site" evidence="2">
    <location>
        <position position="170"/>
    </location>
    <ligand>
        <name>[CaMn4O5] cluster</name>
        <dbReference type="ChEBI" id="CHEBI:189552"/>
    </ligand>
</feature>
<feature type="binding site" evidence="2">
    <location>
        <position position="189"/>
    </location>
    <ligand>
        <name>[CaMn4O5] cluster</name>
        <dbReference type="ChEBI" id="CHEBI:189552"/>
    </ligand>
</feature>
<feature type="binding site" description="axial binding residue" evidence="2">
    <location>
        <position position="198"/>
    </location>
    <ligand>
        <name>chlorophyll a</name>
        <dbReference type="ChEBI" id="CHEBI:58416"/>
        <label>PD1</label>
    </ligand>
    <ligandPart>
        <name>Mg</name>
        <dbReference type="ChEBI" id="CHEBI:25107"/>
    </ligandPart>
</feature>
<feature type="binding site" evidence="2">
    <location>
        <position position="215"/>
    </location>
    <ligand>
        <name>a quinone</name>
        <dbReference type="ChEBI" id="CHEBI:132124"/>
        <label>B</label>
    </ligand>
</feature>
<feature type="binding site" evidence="2">
    <location>
        <position position="215"/>
    </location>
    <ligand>
        <name>Fe cation</name>
        <dbReference type="ChEBI" id="CHEBI:24875"/>
        <note>ligand shared with heterodimeric partner</note>
    </ligand>
</feature>
<feature type="binding site" evidence="2">
    <location>
        <begin position="264"/>
        <end position="265"/>
    </location>
    <ligand>
        <name>a quinone</name>
        <dbReference type="ChEBI" id="CHEBI:132124"/>
        <label>B</label>
    </ligand>
</feature>
<feature type="binding site" evidence="2">
    <location>
        <position position="272"/>
    </location>
    <ligand>
        <name>Fe cation</name>
        <dbReference type="ChEBI" id="CHEBI:24875"/>
        <note>ligand shared with heterodimeric partner</note>
    </ligand>
</feature>
<feature type="binding site" evidence="2">
    <location>
        <position position="332"/>
    </location>
    <ligand>
        <name>[CaMn4O5] cluster</name>
        <dbReference type="ChEBI" id="CHEBI:189552"/>
    </ligand>
</feature>
<feature type="binding site" evidence="2">
    <location>
        <position position="333"/>
    </location>
    <ligand>
        <name>[CaMn4O5] cluster</name>
        <dbReference type="ChEBI" id="CHEBI:189552"/>
    </ligand>
</feature>
<feature type="binding site" evidence="2">
    <location>
        <position position="342"/>
    </location>
    <ligand>
        <name>[CaMn4O5] cluster</name>
        <dbReference type="ChEBI" id="CHEBI:189552"/>
    </ligand>
</feature>
<feature type="binding site" evidence="2">
    <location>
        <position position="344"/>
    </location>
    <ligand>
        <name>[CaMn4O5] cluster</name>
        <dbReference type="ChEBI" id="CHEBI:189552"/>
    </ligand>
</feature>
<feature type="site" description="Tyrosine radical intermediate" evidence="2">
    <location>
        <position position="161"/>
    </location>
</feature>
<feature type="site" description="Stabilizes free radical intermediate" evidence="2">
    <location>
        <position position="190"/>
    </location>
</feature>
<feature type="site" description="Cleavage; by CTPA" evidence="2">
    <location>
        <begin position="344"/>
        <end position="345"/>
    </location>
</feature>
<feature type="modified residue" description="N-acetylthreonine" evidence="1 2">
    <location>
        <position position="2"/>
    </location>
</feature>
<feature type="modified residue" description="Phosphothreonine" evidence="1 2">
    <location>
        <position position="2"/>
    </location>
</feature>
<geneLocation type="chloroplast"/>
<proteinExistence type="inferred from homology"/>
<dbReference type="EC" id="1.10.3.9" evidence="2"/>
<dbReference type="EMBL" id="AP009370">
    <property type="protein sequence ID" value="BAF50090.1"/>
    <property type="molecule type" value="Genomic_DNA"/>
</dbReference>
<dbReference type="RefSeq" id="YP_001123266.1">
    <property type="nucleotide sequence ID" value="NC_009269.1"/>
</dbReference>
<dbReference type="SMR" id="A4QK85"/>
<dbReference type="GeneID" id="4961909"/>
<dbReference type="GO" id="GO:0009535">
    <property type="term" value="C:chloroplast thylakoid membrane"/>
    <property type="evidence" value="ECO:0007669"/>
    <property type="project" value="UniProtKB-SubCell"/>
</dbReference>
<dbReference type="GO" id="GO:0009523">
    <property type="term" value="C:photosystem II"/>
    <property type="evidence" value="ECO:0007669"/>
    <property type="project" value="UniProtKB-KW"/>
</dbReference>
<dbReference type="GO" id="GO:0016168">
    <property type="term" value="F:chlorophyll binding"/>
    <property type="evidence" value="ECO:0007669"/>
    <property type="project" value="UniProtKB-UniRule"/>
</dbReference>
<dbReference type="GO" id="GO:0045156">
    <property type="term" value="F:electron transporter, transferring electrons within the cyclic electron transport pathway of photosynthesis activity"/>
    <property type="evidence" value="ECO:0007669"/>
    <property type="project" value="InterPro"/>
</dbReference>
<dbReference type="GO" id="GO:0005506">
    <property type="term" value="F:iron ion binding"/>
    <property type="evidence" value="ECO:0007669"/>
    <property type="project" value="UniProtKB-UniRule"/>
</dbReference>
<dbReference type="GO" id="GO:0016682">
    <property type="term" value="F:oxidoreductase activity, acting on diphenols and related substances as donors, oxygen as acceptor"/>
    <property type="evidence" value="ECO:0007669"/>
    <property type="project" value="UniProtKB-UniRule"/>
</dbReference>
<dbReference type="GO" id="GO:0010242">
    <property type="term" value="F:oxygen evolving activity"/>
    <property type="evidence" value="ECO:0007669"/>
    <property type="project" value="UniProtKB-EC"/>
</dbReference>
<dbReference type="GO" id="GO:0009772">
    <property type="term" value="P:photosynthetic electron transport in photosystem II"/>
    <property type="evidence" value="ECO:0007669"/>
    <property type="project" value="InterPro"/>
</dbReference>
<dbReference type="GO" id="GO:0009635">
    <property type="term" value="P:response to herbicide"/>
    <property type="evidence" value="ECO:0007669"/>
    <property type="project" value="UniProtKB-KW"/>
</dbReference>
<dbReference type="CDD" id="cd09289">
    <property type="entry name" value="Photosystem-II_D1"/>
    <property type="match status" value="1"/>
</dbReference>
<dbReference type="FunFam" id="1.20.85.10:FF:000002">
    <property type="entry name" value="Photosystem II protein D1"/>
    <property type="match status" value="1"/>
</dbReference>
<dbReference type="Gene3D" id="1.20.85.10">
    <property type="entry name" value="Photosystem II protein D1-like"/>
    <property type="match status" value="1"/>
</dbReference>
<dbReference type="HAMAP" id="MF_01379">
    <property type="entry name" value="PSII_PsbA_D1"/>
    <property type="match status" value="1"/>
</dbReference>
<dbReference type="InterPro" id="IPR055266">
    <property type="entry name" value="D1/D2"/>
</dbReference>
<dbReference type="InterPro" id="IPR036854">
    <property type="entry name" value="Photo_II_D1/D2_sf"/>
</dbReference>
<dbReference type="InterPro" id="IPR000484">
    <property type="entry name" value="Photo_RC_L/M"/>
</dbReference>
<dbReference type="InterPro" id="IPR055265">
    <property type="entry name" value="Photo_RC_L/M_CS"/>
</dbReference>
<dbReference type="InterPro" id="IPR005867">
    <property type="entry name" value="PSII_D1"/>
</dbReference>
<dbReference type="NCBIfam" id="TIGR01151">
    <property type="entry name" value="psbA"/>
    <property type="match status" value="1"/>
</dbReference>
<dbReference type="PANTHER" id="PTHR33149">
    <property type="entry name" value="PHOTOSYSTEM II PROTEIN D1"/>
    <property type="match status" value="1"/>
</dbReference>
<dbReference type="PANTHER" id="PTHR33149:SF55">
    <property type="entry name" value="PHOTOSYSTEM II PROTEIN D1"/>
    <property type="match status" value="1"/>
</dbReference>
<dbReference type="Pfam" id="PF00124">
    <property type="entry name" value="Photo_RC"/>
    <property type="match status" value="1"/>
</dbReference>
<dbReference type="PRINTS" id="PR00256">
    <property type="entry name" value="REACTNCENTRE"/>
</dbReference>
<dbReference type="SUPFAM" id="SSF81483">
    <property type="entry name" value="Bacterial photosystem II reaction centre, L and M subunits"/>
    <property type="match status" value="1"/>
</dbReference>
<dbReference type="PROSITE" id="PS00244">
    <property type="entry name" value="REACTION_CENTER"/>
    <property type="match status" value="1"/>
</dbReference>
<organism>
    <name type="scientific">Barbarea verna</name>
    <name type="common">Land cress</name>
    <name type="synonym">Erysimum vernum</name>
    <dbReference type="NCBI Taxonomy" id="50458"/>
    <lineage>
        <taxon>Eukaryota</taxon>
        <taxon>Viridiplantae</taxon>
        <taxon>Streptophyta</taxon>
        <taxon>Embryophyta</taxon>
        <taxon>Tracheophyta</taxon>
        <taxon>Spermatophyta</taxon>
        <taxon>Magnoliopsida</taxon>
        <taxon>eudicotyledons</taxon>
        <taxon>Gunneridae</taxon>
        <taxon>Pentapetalae</taxon>
        <taxon>rosids</taxon>
        <taxon>malvids</taxon>
        <taxon>Brassicales</taxon>
        <taxon>Brassicaceae</taxon>
        <taxon>Cardamineae</taxon>
        <taxon>Barbarea</taxon>
    </lineage>
</organism>
<evidence type="ECO:0000250" key="1">
    <source>
        <dbReference type="UniProtKB" id="P83755"/>
    </source>
</evidence>
<evidence type="ECO:0000255" key="2">
    <source>
        <dbReference type="HAMAP-Rule" id="MF_01379"/>
    </source>
</evidence>
<protein>
    <recommendedName>
        <fullName evidence="2">Photosystem II protein D1</fullName>
        <shortName evidence="2">PSII D1 protein</shortName>
        <ecNumber evidence="2">1.10.3.9</ecNumber>
    </recommendedName>
    <alternativeName>
        <fullName evidence="2">Photosystem II Q(B) protein</fullName>
    </alternativeName>
</protein>
<sequence>MTAILERRESESLWGRFCNWITSTENRLYIGWFGVLMIPTLLTATSVFIIAFIAAPPVDIDGIREPVSGSLLYGNNIISGAIIPTSAAIGLHFYPIWEAASVDEWLYNGGPYELIVLHFLLGVACYMGREWELSFRLGMRPWIAVAYSAPVAAATAVFLIYPIGQGSFSDGMPLGISGTFNFMIVFQAEHNILMHPFHMLGVAGVFGGSLFSAMHGSLVTSSLIRETTENESANEGYRFGQEEETYNIVAAHGYFGRLIFQYASFNNSRSLHFFLTAWPVVGIWFTALGISTMAFNLNGFNFNQSVVDSQGRVINTWADIINRANLGMEVMHERNAHNFPLDLAAVEAPSTNG</sequence>
<reference key="1">
    <citation type="submission" date="2007-03" db="EMBL/GenBank/DDBJ databases">
        <title>Sequencing analysis of Barbarea verna chloroplast DNA.</title>
        <authorList>
            <person name="Hosouchi T."/>
            <person name="Tsuruoka H."/>
            <person name="Kotani H."/>
        </authorList>
    </citation>
    <scope>NUCLEOTIDE SEQUENCE [LARGE SCALE GENOMIC DNA]</scope>
</reference>
<accession>A4QK85</accession>
<keyword id="KW-0007">Acetylation</keyword>
<keyword id="KW-0106">Calcium</keyword>
<keyword id="KW-0148">Chlorophyll</keyword>
<keyword id="KW-0150">Chloroplast</keyword>
<keyword id="KW-0157">Chromophore</keyword>
<keyword id="KW-0249">Electron transport</keyword>
<keyword id="KW-0359">Herbicide resistance</keyword>
<keyword id="KW-0408">Iron</keyword>
<keyword id="KW-0460">Magnesium</keyword>
<keyword id="KW-0464">Manganese</keyword>
<keyword id="KW-0472">Membrane</keyword>
<keyword id="KW-0479">Metal-binding</keyword>
<keyword id="KW-0560">Oxidoreductase</keyword>
<keyword id="KW-0597">Phosphoprotein</keyword>
<keyword id="KW-0602">Photosynthesis</keyword>
<keyword id="KW-0604">Photosystem II</keyword>
<keyword id="KW-0934">Plastid</keyword>
<keyword id="KW-0793">Thylakoid</keyword>
<keyword id="KW-0812">Transmembrane</keyword>
<keyword id="KW-1133">Transmembrane helix</keyword>
<keyword id="KW-0813">Transport</keyword>
<comment type="function">
    <text evidence="2">Photosystem II (PSII) is a light-driven water:plastoquinone oxidoreductase that uses light energy to abstract electrons from H(2)O, generating O(2) and a proton gradient subsequently used for ATP formation. It consists of a core antenna complex that captures photons, and an electron transfer chain that converts photonic excitation into a charge separation. The D1/D2 (PsbA/PsbD) reaction center heterodimer binds P680, the primary electron donor of PSII as well as several subsequent electron acceptors.</text>
</comment>
<comment type="catalytic activity">
    <reaction evidence="2">
        <text>2 a plastoquinone + 4 hnu + 2 H2O = 2 a plastoquinol + O2</text>
        <dbReference type="Rhea" id="RHEA:36359"/>
        <dbReference type="Rhea" id="RHEA-COMP:9561"/>
        <dbReference type="Rhea" id="RHEA-COMP:9562"/>
        <dbReference type="ChEBI" id="CHEBI:15377"/>
        <dbReference type="ChEBI" id="CHEBI:15379"/>
        <dbReference type="ChEBI" id="CHEBI:17757"/>
        <dbReference type="ChEBI" id="CHEBI:30212"/>
        <dbReference type="ChEBI" id="CHEBI:62192"/>
        <dbReference type="EC" id="1.10.3.9"/>
    </reaction>
</comment>
<comment type="cofactor">
    <text evidence="2">The D1/D2 heterodimer binds P680, chlorophylls that are the primary electron donor of PSII, and subsequent electron acceptors. It shares a non-heme iron and each subunit binds pheophytin, quinone, additional chlorophylls, carotenoids and lipids. D1 provides most of the ligands for the Mn4-Ca-O5 cluster of the oxygen-evolving complex (OEC). There is also a Cl(-1) ion associated with D1 and D2, which is required for oxygen evolution. The PSII complex binds additional chlorophylls, carotenoids and specific lipids.</text>
</comment>
<comment type="subunit">
    <text evidence="2">PSII is composed of 1 copy each of membrane proteins PsbA, PsbB, PsbC, PsbD, PsbE, PsbF, PsbH, PsbI, PsbJ, PsbK, PsbL, PsbM, PsbT, PsbX, PsbY, PsbZ, Psb30/Ycf12, at least 3 peripheral proteins of the oxygen-evolving complex and a large number of cofactors. It forms dimeric complexes.</text>
</comment>
<comment type="subcellular location">
    <subcellularLocation>
        <location evidence="2">Plastid</location>
        <location evidence="2">Chloroplast thylakoid membrane</location>
        <topology evidence="2">Multi-pass membrane protein</topology>
    </subcellularLocation>
</comment>
<comment type="PTM">
    <text evidence="2">Tyr-161 forms a radical intermediate that is referred to as redox-active TyrZ, YZ or Y-Z.</text>
</comment>
<comment type="PTM">
    <text evidence="2">C-terminally processed by CTPA; processing is essential to allow assembly of the oxygen-evolving complex and thus photosynthetic growth.</text>
</comment>
<comment type="miscellaneous">
    <text evidence="2">2 of the reaction center chlorophylls (ChlD1 and ChlD2) are entirely coordinated by water.</text>
</comment>
<comment type="miscellaneous">
    <text evidence="2">Herbicides such as atrazine, BNT, diuron or ioxynil bind in the Q(B) binding site and block subsequent electron transfer.</text>
</comment>
<comment type="similarity">
    <text evidence="2">Belongs to the reaction center PufL/M/PsbA/D family.</text>
</comment>
<gene>
    <name evidence="2" type="primary">psbA</name>
</gene>